<protein>
    <recommendedName>
        <fullName evidence="1">Phosphoglycerate kinase</fullName>
        <ecNumber evidence="1">2.7.2.3</ecNumber>
    </recommendedName>
</protein>
<comment type="catalytic activity">
    <reaction evidence="1">
        <text>(2R)-3-phosphoglycerate + ATP = (2R)-3-phospho-glyceroyl phosphate + ADP</text>
        <dbReference type="Rhea" id="RHEA:14801"/>
        <dbReference type="ChEBI" id="CHEBI:30616"/>
        <dbReference type="ChEBI" id="CHEBI:57604"/>
        <dbReference type="ChEBI" id="CHEBI:58272"/>
        <dbReference type="ChEBI" id="CHEBI:456216"/>
        <dbReference type="EC" id="2.7.2.3"/>
    </reaction>
</comment>
<comment type="pathway">
    <text evidence="1">Carbohydrate degradation; glycolysis; pyruvate from D-glyceraldehyde 3-phosphate: step 2/5.</text>
</comment>
<comment type="subunit">
    <text evidence="1">Monomer.</text>
</comment>
<comment type="subcellular location">
    <subcellularLocation>
        <location evidence="1">Cytoplasm</location>
    </subcellularLocation>
</comment>
<comment type="similarity">
    <text evidence="1">Belongs to the phosphoglycerate kinase family.</text>
</comment>
<gene>
    <name evidence="1" type="primary">pgk</name>
    <name type="ordered locus">Cbei_0598</name>
</gene>
<feature type="chain" id="PRO_1000076584" description="Phosphoglycerate kinase">
    <location>
        <begin position="1"/>
        <end position="391"/>
    </location>
</feature>
<feature type="binding site" evidence="1">
    <location>
        <begin position="23"/>
        <end position="25"/>
    </location>
    <ligand>
        <name>substrate</name>
    </ligand>
</feature>
<feature type="binding site" evidence="1">
    <location>
        <position position="38"/>
    </location>
    <ligand>
        <name>substrate</name>
    </ligand>
</feature>
<feature type="binding site" evidence="1">
    <location>
        <begin position="61"/>
        <end position="64"/>
    </location>
    <ligand>
        <name>substrate</name>
    </ligand>
</feature>
<feature type="binding site" evidence="1">
    <location>
        <position position="117"/>
    </location>
    <ligand>
        <name>substrate</name>
    </ligand>
</feature>
<feature type="binding site" evidence="1">
    <location>
        <position position="150"/>
    </location>
    <ligand>
        <name>substrate</name>
    </ligand>
</feature>
<feature type="binding site" evidence="1">
    <location>
        <position position="201"/>
    </location>
    <ligand>
        <name>ATP</name>
        <dbReference type="ChEBI" id="CHEBI:30616"/>
    </ligand>
</feature>
<feature type="binding site" evidence="1">
    <location>
        <position position="291"/>
    </location>
    <ligand>
        <name>ATP</name>
        <dbReference type="ChEBI" id="CHEBI:30616"/>
    </ligand>
</feature>
<feature type="binding site" evidence="1">
    <location>
        <position position="322"/>
    </location>
    <ligand>
        <name>ATP</name>
        <dbReference type="ChEBI" id="CHEBI:30616"/>
    </ligand>
</feature>
<feature type="binding site" evidence="1">
    <location>
        <begin position="348"/>
        <end position="351"/>
    </location>
    <ligand>
        <name>ATP</name>
        <dbReference type="ChEBI" id="CHEBI:30616"/>
    </ligand>
</feature>
<reference key="1">
    <citation type="submission" date="2007-06" db="EMBL/GenBank/DDBJ databases">
        <title>Complete sequence of Clostridium beijerinckii NCIMB 8052.</title>
        <authorList>
            <consortium name="US DOE Joint Genome Institute"/>
            <person name="Copeland A."/>
            <person name="Lucas S."/>
            <person name="Lapidus A."/>
            <person name="Barry K."/>
            <person name="Detter J.C."/>
            <person name="Glavina del Rio T."/>
            <person name="Hammon N."/>
            <person name="Israni S."/>
            <person name="Dalin E."/>
            <person name="Tice H."/>
            <person name="Pitluck S."/>
            <person name="Sims D."/>
            <person name="Brettin T."/>
            <person name="Bruce D."/>
            <person name="Tapia R."/>
            <person name="Brainard J."/>
            <person name="Schmutz J."/>
            <person name="Larimer F."/>
            <person name="Land M."/>
            <person name="Hauser L."/>
            <person name="Kyrpides N."/>
            <person name="Mikhailova N."/>
            <person name="Bennet G."/>
            <person name="Cann I."/>
            <person name="Chen J.-S."/>
            <person name="Contreras A.L."/>
            <person name="Jones D."/>
            <person name="Kashket E."/>
            <person name="Mitchell W."/>
            <person name="Stoddard S."/>
            <person name="Schwarz W."/>
            <person name="Qureshi N."/>
            <person name="Young M."/>
            <person name="Shi Z."/>
            <person name="Ezeji T."/>
            <person name="White B."/>
            <person name="Blaschek H."/>
            <person name="Richardson P."/>
        </authorList>
    </citation>
    <scope>NUCLEOTIDE SEQUENCE [LARGE SCALE GENOMIC DNA]</scope>
    <source>
        <strain>ATCC 51743 / NCIMB 8052</strain>
    </source>
</reference>
<dbReference type="EC" id="2.7.2.3" evidence="1"/>
<dbReference type="EMBL" id="CP000721">
    <property type="protein sequence ID" value="ABR32785.1"/>
    <property type="molecule type" value="Genomic_DNA"/>
</dbReference>
<dbReference type="RefSeq" id="WP_011967946.1">
    <property type="nucleotide sequence ID" value="NC_009617.1"/>
</dbReference>
<dbReference type="SMR" id="A6LR05"/>
<dbReference type="KEGG" id="cbe:Cbei_0598"/>
<dbReference type="eggNOG" id="COG0126">
    <property type="taxonomic scope" value="Bacteria"/>
</dbReference>
<dbReference type="HOGENOM" id="CLU_025427_0_2_9"/>
<dbReference type="UniPathway" id="UPA00109">
    <property type="reaction ID" value="UER00185"/>
</dbReference>
<dbReference type="Proteomes" id="UP000000565">
    <property type="component" value="Chromosome"/>
</dbReference>
<dbReference type="GO" id="GO:0005829">
    <property type="term" value="C:cytosol"/>
    <property type="evidence" value="ECO:0007669"/>
    <property type="project" value="TreeGrafter"/>
</dbReference>
<dbReference type="GO" id="GO:0043531">
    <property type="term" value="F:ADP binding"/>
    <property type="evidence" value="ECO:0007669"/>
    <property type="project" value="TreeGrafter"/>
</dbReference>
<dbReference type="GO" id="GO:0005524">
    <property type="term" value="F:ATP binding"/>
    <property type="evidence" value="ECO:0007669"/>
    <property type="project" value="UniProtKB-KW"/>
</dbReference>
<dbReference type="GO" id="GO:0004618">
    <property type="term" value="F:phosphoglycerate kinase activity"/>
    <property type="evidence" value="ECO:0007669"/>
    <property type="project" value="UniProtKB-UniRule"/>
</dbReference>
<dbReference type="GO" id="GO:0006094">
    <property type="term" value="P:gluconeogenesis"/>
    <property type="evidence" value="ECO:0007669"/>
    <property type="project" value="TreeGrafter"/>
</dbReference>
<dbReference type="GO" id="GO:0006096">
    <property type="term" value="P:glycolytic process"/>
    <property type="evidence" value="ECO:0007669"/>
    <property type="project" value="UniProtKB-UniRule"/>
</dbReference>
<dbReference type="CDD" id="cd00318">
    <property type="entry name" value="Phosphoglycerate_kinase"/>
    <property type="match status" value="1"/>
</dbReference>
<dbReference type="FunFam" id="3.40.50.1260:FF:000003">
    <property type="entry name" value="Phosphoglycerate kinase"/>
    <property type="match status" value="1"/>
</dbReference>
<dbReference type="FunFam" id="3.40.50.1260:FF:000006">
    <property type="entry name" value="Phosphoglycerate kinase"/>
    <property type="match status" value="1"/>
</dbReference>
<dbReference type="Gene3D" id="3.40.50.1260">
    <property type="entry name" value="Phosphoglycerate kinase, N-terminal domain"/>
    <property type="match status" value="2"/>
</dbReference>
<dbReference type="HAMAP" id="MF_00145">
    <property type="entry name" value="Phosphoglyc_kinase"/>
    <property type="match status" value="1"/>
</dbReference>
<dbReference type="InterPro" id="IPR001576">
    <property type="entry name" value="Phosphoglycerate_kinase"/>
</dbReference>
<dbReference type="InterPro" id="IPR015911">
    <property type="entry name" value="Phosphoglycerate_kinase_CS"/>
</dbReference>
<dbReference type="InterPro" id="IPR015824">
    <property type="entry name" value="Phosphoglycerate_kinase_N"/>
</dbReference>
<dbReference type="InterPro" id="IPR036043">
    <property type="entry name" value="Phosphoglycerate_kinase_sf"/>
</dbReference>
<dbReference type="PANTHER" id="PTHR11406">
    <property type="entry name" value="PHOSPHOGLYCERATE KINASE"/>
    <property type="match status" value="1"/>
</dbReference>
<dbReference type="PANTHER" id="PTHR11406:SF23">
    <property type="entry name" value="PHOSPHOGLYCERATE KINASE 1, CHLOROPLASTIC-RELATED"/>
    <property type="match status" value="1"/>
</dbReference>
<dbReference type="Pfam" id="PF00162">
    <property type="entry name" value="PGK"/>
    <property type="match status" value="1"/>
</dbReference>
<dbReference type="PIRSF" id="PIRSF000724">
    <property type="entry name" value="Pgk"/>
    <property type="match status" value="1"/>
</dbReference>
<dbReference type="PRINTS" id="PR00477">
    <property type="entry name" value="PHGLYCKINASE"/>
</dbReference>
<dbReference type="SUPFAM" id="SSF53748">
    <property type="entry name" value="Phosphoglycerate kinase"/>
    <property type="match status" value="1"/>
</dbReference>
<dbReference type="PROSITE" id="PS00111">
    <property type="entry name" value="PGLYCERATE_KINASE"/>
    <property type="match status" value="1"/>
</dbReference>
<keyword id="KW-0067">ATP-binding</keyword>
<keyword id="KW-0963">Cytoplasm</keyword>
<keyword id="KW-0324">Glycolysis</keyword>
<keyword id="KW-0418">Kinase</keyword>
<keyword id="KW-0547">Nucleotide-binding</keyword>
<keyword id="KW-0808">Transferase</keyword>
<accession>A6LR05</accession>
<name>PGK_CLOB8</name>
<organism>
    <name type="scientific">Clostridium beijerinckii (strain ATCC 51743 / NCIMB 8052)</name>
    <name type="common">Clostridium acetobutylicum</name>
    <dbReference type="NCBI Taxonomy" id="290402"/>
    <lineage>
        <taxon>Bacteria</taxon>
        <taxon>Bacillati</taxon>
        <taxon>Bacillota</taxon>
        <taxon>Clostridia</taxon>
        <taxon>Eubacteriales</taxon>
        <taxon>Clostridiaceae</taxon>
        <taxon>Clostridium</taxon>
    </lineage>
</organism>
<evidence type="ECO:0000255" key="1">
    <source>
        <dbReference type="HAMAP-Rule" id="MF_00145"/>
    </source>
</evidence>
<sequence>MNFNKKTIEDIEVSGKKVLVRCDFNVPLKDGVITDENRLVGALPTIKYLVEKGAKVILCSHLGKDASKSLAPVATRLSEMLGKEVVFARDEEVVGENAKKAVSEMKDGDIVLLENTRCRKEETKNIPEFSKELASLADVFVNDAFGTAHRAHCSTVGVTDYLDTAVCGYLIQKELKFLGNAVESPVRPFVAILGGAKVSDKIAVINNLLDKVNTIIIGGGMAYTFLKAQGYEIGTSLVEEDRLEYAKEMVAKAAEKGVKFLLPVDHRVAAEFKDVEATITEDQNIPVGNMGLDIGPKTETLYADAIKDAKTVIWNGPMGVFEFENYNKGTIAVAKAMADADATTIIGGGDSAAAVNILGFGDKMTHISTGGGASLEFLEGKVLPGIAALND</sequence>
<proteinExistence type="inferred from homology"/>